<keyword id="KW-0238">DNA-binding</keyword>
<keyword id="KW-1185">Reference proteome</keyword>
<keyword id="KW-0804">Transcription</keyword>
<keyword id="KW-0805">Transcription regulation</keyword>
<reference key="1">
    <citation type="journal article" date="2002" name="Proc. Natl. Acad. Sci. U.S.A.">
        <title>Extensive mosaic structure revealed by the complete genome sequence of uropathogenic Escherichia coli.</title>
        <authorList>
            <person name="Welch R.A."/>
            <person name="Burland V."/>
            <person name="Plunkett G. III"/>
            <person name="Redford P."/>
            <person name="Roesch P."/>
            <person name="Rasko D."/>
            <person name="Buckles E.L."/>
            <person name="Liou S.-R."/>
            <person name="Boutin A."/>
            <person name="Hackett J."/>
            <person name="Stroud D."/>
            <person name="Mayhew G.F."/>
            <person name="Rose D.J."/>
            <person name="Zhou S."/>
            <person name="Schwartz D.C."/>
            <person name="Perna N.T."/>
            <person name="Mobley H.L.T."/>
            <person name="Donnenberg M.S."/>
            <person name="Blattner F.R."/>
        </authorList>
    </citation>
    <scope>NUCLEOTIDE SEQUENCE [LARGE SCALE GENOMIC DNA]</scope>
    <source>
        <strain>CFT073 / ATCC 700928 / UPEC</strain>
    </source>
</reference>
<comment type="function">
    <text evidence="1">Controls the transcription of genes involved in arginine and lysine metabolism.</text>
</comment>
<comment type="subunit">
    <text evidence="1">Homodimer.</text>
</comment>
<comment type="similarity">
    <text evidence="2">Belongs to the LysR transcriptional regulatory family.</text>
</comment>
<comment type="sequence caution" evidence="2">
    <conflict type="erroneous initiation">
        <sequence resource="EMBL-CDS" id="AAN81945"/>
    </conflict>
</comment>
<protein>
    <recommendedName>
        <fullName evidence="1">HTH-type transcriptional regulator ArgP</fullName>
    </recommendedName>
</protein>
<sequence>MKRPDYRTLQALDAVIRERGFERAAQKLCITQSAVSQRIKQLENMFGQPLLVRTVPPRPTEQGQKLLALLRQVELLEEEWLGDEQTGSTPLLLSLAVNADSLATWLLPALAPVLADSPIRLNLQVEDETRTQERLRRGEVVGAVSIQHQALPSCLVDKLGALDYLFVSSKPFAEKYFPNGVTRSALLKAPVVAFDHLDDMHQAFLQQNFDLPPGSVPCHIVNSSEAFVQLARQGTTCCMIPHLQIEKELASGELIDLTPGLFQRRMLYWHRFAPESRMMRKVTDALLDYGHKVLRQD</sequence>
<evidence type="ECO:0000255" key="1">
    <source>
        <dbReference type="HAMAP-Rule" id="MF_00513"/>
    </source>
</evidence>
<evidence type="ECO:0000305" key="2"/>
<gene>
    <name evidence="1" type="primary">argP</name>
    <name type="synonym">iciA</name>
    <name type="ordered locus">c3497</name>
</gene>
<dbReference type="EMBL" id="AE014075">
    <property type="protein sequence ID" value="AAN81945.1"/>
    <property type="status" value="ALT_INIT"/>
    <property type="molecule type" value="Genomic_DNA"/>
</dbReference>
<dbReference type="RefSeq" id="WP_000828351.1">
    <property type="nucleotide sequence ID" value="NZ_CP051263.1"/>
</dbReference>
<dbReference type="SMR" id="P0A8S2"/>
<dbReference type="STRING" id="199310.c3497"/>
<dbReference type="GeneID" id="93779084"/>
<dbReference type="KEGG" id="ecc:c3497"/>
<dbReference type="eggNOG" id="COG0583">
    <property type="taxonomic scope" value="Bacteria"/>
</dbReference>
<dbReference type="HOGENOM" id="CLU_063829_0_0_6"/>
<dbReference type="Proteomes" id="UP000001410">
    <property type="component" value="Chromosome"/>
</dbReference>
<dbReference type="GO" id="GO:0003677">
    <property type="term" value="F:DNA binding"/>
    <property type="evidence" value="ECO:0007669"/>
    <property type="project" value="UniProtKB-UniRule"/>
</dbReference>
<dbReference type="GO" id="GO:0003700">
    <property type="term" value="F:DNA-binding transcription factor activity"/>
    <property type="evidence" value="ECO:0007669"/>
    <property type="project" value="UniProtKB-UniRule"/>
</dbReference>
<dbReference type="CDD" id="cd08428">
    <property type="entry name" value="PBP2_IciA_ArgP"/>
    <property type="match status" value="1"/>
</dbReference>
<dbReference type="FunFam" id="1.10.10.10:FF:000061">
    <property type="entry name" value="HTH-type transcriptional regulator ArgP"/>
    <property type="match status" value="1"/>
</dbReference>
<dbReference type="FunFam" id="3.40.190.290:FF:000002">
    <property type="entry name" value="HTH-type transcriptional regulator ArgP"/>
    <property type="match status" value="1"/>
</dbReference>
<dbReference type="Gene3D" id="3.40.190.290">
    <property type="match status" value="1"/>
</dbReference>
<dbReference type="Gene3D" id="1.10.10.10">
    <property type="entry name" value="Winged helix-like DNA-binding domain superfamily/Winged helix DNA-binding domain"/>
    <property type="match status" value="1"/>
</dbReference>
<dbReference type="HAMAP" id="MF_00513">
    <property type="entry name" value="HTH_type_ArgP"/>
    <property type="match status" value="1"/>
</dbReference>
<dbReference type="InterPro" id="IPR017685">
    <property type="entry name" value="ArgP"/>
</dbReference>
<dbReference type="InterPro" id="IPR023490">
    <property type="entry name" value="ArgP_gammaproteobact"/>
</dbReference>
<dbReference type="InterPro" id="IPR050176">
    <property type="entry name" value="LTTR"/>
</dbReference>
<dbReference type="InterPro" id="IPR005119">
    <property type="entry name" value="LysR_subst-bd"/>
</dbReference>
<dbReference type="InterPro" id="IPR000847">
    <property type="entry name" value="Tscrpt_reg_HTH_LysR"/>
</dbReference>
<dbReference type="InterPro" id="IPR036388">
    <property type="entry name" value="WH-like_DNA-bd_sf"/>
</dbReference>
<dbReference type="InterPro" id="IPR036390">
    <property type="entry name" value="WH_DNA-bd_sf"/>
</dbReference>
<dbReference type="NCBIfam" id="TIGR03298">
    <property type="entry name" value="argP"/>
    <property type="match status" value="1"/>
</dbReference>
<dbReference type="NCBIfam" id="NF002964">
    <property type="entry name" value="PRK03635.1"/>
    <property type="match status" value="1"/>
</dbReference>
<dbReference type="NCBIfam" id="NF009888">
    <property type="entry name" value="PRK13348.1"/>
    <property type="match status" value="1"/>
</dbReference>
<dbReference type="PANTHER" id="PTHR30579:SF2">
    <property type="entry name" value="HTH-TYPE TRANSCRIPTIONAL REGULATOR ARGP"/>
    <property type="match status" value="1"/>
</dbReference>
<dbReference type="PANTHER" id="PTHR30579">
    <property type="entry name" value="TRANSCRIPTIONAL REGULATOR"/>
    <property type="match status" value="1"/>
</dbReference>
<dbReference type="Pfam" id="PF00126">
    <property type="entry name" value="HTH_1"/>
    <property type="match status" value="1"/>
</dbReference>
<dbReference type="Pfam" id="PF03466">
    <property type="entry name" value="LysR_substrate"/>
    <property type="match status" value="1"/>
</dbReference>
<dbReference type="PRINTS" id="PR00039">
    <property type="entry name" value="HTHLYSR"/>
</dbReference>
<dbReference type="SUPFAM" id="SSF53850">
    <property type="entry name" value="Periplasmic binding protein-like II"/>
    <property type="match status" value="1"/>
</dbReference>
<dbReference type="SUPFAM" id="SSF46785">
    <property type="entry name" value="Winged helix' DNA-binding domain"/>
    <property type="match status" value="1"/>
</dbReference>
<dbReference type="PROSITE" id="PS50931">
    <property type="entry name" value="HTH_LYSR"/>
    <property type="match status" value="1"/>
</dbReference>
<accession>P0A8S2</accession>
<accession>P24194</accession>
<feature type="chain" id="PRO_0000105642" description="HTH-type transcriptional regulator ArgP">
    <location>
        <begin position="1"/>
        <end position="297"/>
    </location>
</feature>
<feature type="domain" description="HTH lysR-type" evidence="1">
    <location>
        <begin position="4"/>
        <end position="60"/>
    </location>
</feature>
<feature type="DNA-binding region" description="H-T-H motif" evidence="1">
    <location>
        <begin position="21"/>
        <end position="40"/>
    </location>
</feature>
<proteinExistence type="inferred from homology"/>
<organism>
    <name type="scientific">Escherichia coli O6:H1 (strain CFT073 / ATCC 700928 / UPEC)</name>
    <dbReference type="NCBI Taxonomy" id="199310"/>
    <lineage>
        <taxon>Bacteria</taxon>
        <taxon>Pseudomonadati</taxon>
        <taxon>Pseudomonadota</taxon>
        <taxon>Gammaproteobacteria</taxon>
        <taxon>Enterobacterales</taxon>
        <taxon>Enterobacteriaceae</taxon>
        <taxon>Escherichia</taxon>
    </lineage>
</organism>
<name>ARGP_ECOL6</name>